<evidence type="ECO:0000250" key="1">
    <source>
        <dbReference type="UniProtKB" id="P47728"/>
    </source>
</evidence>
<evidence type="ECO:0000250" key="2">
    <source>
        <dbReference type="UniProtKB" id="Q08331"/>
    </source>
</evidence>
<evidence type="ECO:0000255" key="3">
    <source>
        <dbReference type="PROSITE-ProRule" id="PRU00448"/>
    </source>
</evidence>
<evidence type="ECO:0000305" key="4"/>
<keyword id="KW-0106">Calcium</keyword>
<keyword id="KW-0966">Cell projection</keyword>
<keyword id="KW-0479">Metal-binding</keyword>
<keyword id="KW-1185">Reference proteome</keyword>
<keyword id="KW-0677">Repeat</keyword>
<keyword id="KW-0770">Synapse</keyword>
<organism>
    <name type="scientific">Gallus gallus</name>
    <name type="common">Chicken</name>
    <dbReference type="NCBI Taxonomy" id="9031"/>
    <lineage>
        <taxon>Eukaryota</taxon>
        <taxon>Metazoa</taxon>
        <taxon>Chordata</taxon>
        <taxon>Craniata</taxon>
        <taxon>Vertebrata</taxon>
        <taxon>Euteleostomi</taxon>
        <taxon>Archelosauria</taxon>
        <taxon>Archosauria</taxon>
        <taxon>Dinosauria</taxon>
        <taxon>Saurischia</taxon>
        <taxon>Theropoda</taxon>
        <taxon>Coelurosauria</taxon>
        <taxon>Aves</taxon>
        <taxon>Neognathae</taxon>
        <taxon>Galloanserae</taxon>
        <taxon>Galliformes</taxon>
        <taxon>Phasianidae</taxon>
        <taxon>Phasianinae</taxon>
        <taxon>Gallus</taxon>
    </lineage>
</organism>
<protein>
    <recommendedName>
        <fullName>Calretinin</fullName>
        <shortName>CR</shortName>
    </recommendedName>
</protein>
<name>CALB2_CHICK</name>
<comment type="function">
    <text evidence="1 2">Calcium-binding protein involved in calcium homeostasis and signal transduction. It plays a critical role in buffering intracellular calcium levels and modulating calcium-dependent signaling pathways. Predominantly expressed in specific neuronal populations, influences synaptic plasticity and neuronal excitability, contributing to learning and memory (By similarity). During embryonic development, it facilitates neuronal differentiation and maturation (By similarity).</text>
</comment>
<comment type="subcellular location">
    <subcellularLocation>
        <location evidence="2">Synapse</location>
    </subcellularLocation>
    <subcellularLocation>
        <location evidence="2">Cell projection</location>
        <location evidence="2">Dendrite</location>
    </subcellularLocation>
    <text evidence="2">Located in dendrioles, small dendrites that makes up a brush structure found as the terminal specialization of a dendrite of a unipolar brush cell.</text>
</comment>
<comment type="similarity">
    <text evidence="4">Belongs to the calbindin family.</text>
</comment>
<reference key="1">
    <citation type="journal article" date="1993" name="Eur. J. Biochem.">
        <title>Calcium binding by chick calretinin and rat calbindin D28k synthesised in bacteria.</title>
        <authorList>
            <person name="Cheung W.T."/>
            <person name="Richards D.E."/>
            <person name="Rogers J.H."/>
        </authorList>
    </citation>
    <scope>NUCLEOTIDE SEQUENCE [MRNA]</scope>
</reference>
<reference key="2">
    <citation type="journal article" date="1987" name="J. Cell Biol.">
        <title>Calretinin: a gene for a novel calcium-binding protein expressed principally in neurons.</title>
        <authorList>
            <person name="Rogers J.H."/>
        </authorList>
    </citation>
    <scope>NUCLEOTIDE SEQUENCE [MRNA] OF 6-194</scope>
</reference>
<reference key="3">
    <citation type="journal article" date="1988" name="J. Mol. Biol.">
        <title>Structure of chick chromosomal genes for calbindin and calretinin.</title>
        <authorList>
            <person name="Wilson P.W."/>
            <person name="Rogers J.H."/>
            <person name="Harding M."/>
            <person name="Pohl V."/>
            <person name="Pattyn G."/>
            <person name="Lawson D.E.M."/>
        </authorList>
    </citation>
    <scope>NUCLEOTIDE SEQUENCE [MRNA] OF 54-207</scope>
</reference>
<gene>
    <name type="primary">CALB2</name>
</gene>
<dbReference type="EMBL" id="X62866">
    <property type="protein sequence ID" value="CAA44666.1"/>
    <property type="molecule type" value="mRNA"/>
</dbReference>
<dbReference type="EMBL" id="Y00625">
    <property type="protein sequence ID" value="CAA68664.1"/>
    <property type="molecule type" value="mRNA"/>
</dbReference>
<dbReference type="PIR" id="S34773">
    <property type="entry name" value="A27067"/>
</dbReference>
<dbReference type="RefSeq" id="NP_990647.1">
    <property type="nucleotide sequence ID" value="NM_205316.2"/>
</dbReference>
<dbReference type="SMR" id="P07090"/>
<dbReference type="BioGRID" id="676515">
    <property type="interactions" value="1"/>
</dbReference>
<dbReference type="FunCoup" id="P07090">
    <property type="interactions" value="240"/>
</dbReference>
<dbReference type="IntAct" id="P07090">
    <property type="interactions" value="1"/>
</dbReference>
<dbReference type="STRING" id="9031.ENSGALP00000041715"/>
<dbReference type="PaxDb" id="9031-ENSGALP00000041715"/>
<dbReference type="Ensembl" id="ENSGALT00000042987">
    <property type="protein sequence ID" value="ENSGALP00000041715"/>
    <property type="gene ID" value="ENSGALG00000026903"/>
</dbReference>
<dbReference type="Ensembl" id="ENSGALT00010054419.1">
    <property type="protein sequence ID" value="ENSGALP00010032871.1"/>
    <property type="gene ID" value="ENSGALG00010022382.1"/>
</dbReference>
<dbReference type="GeneID" id="396255"/>
<dbReference type="KEGG" id="gga:396255"/>
<dbReference type="CTD" id="794"/>
<dbReference type="VEuPathDB" id="HostDB:geneid_396255"/>
<dbReference type="eggNOG" id="KOG0027">
    <property type="taxonomic scope" value="Eukaryota"/>
</dbReference>
<dbReference type="GeneTree" id="ENSGT00950000183108"/>
<dbReference type="HOGENOM" id="CLU_054826_1_1_1"/>
<dbReference type="InParanoid" id="P07090"/>
<dbReference type="OMA" id="IVLCNEP"/>
<dbReference type="OrthoDB" id="428774at2759"/>
<dbReference type="PhylomeDB" id="P07090"/>
<dbReference type="PRO" id="PR:P07090"/>
<dbReference type="Proteomes" id="UP000000539">
    <property type="component" value="Chromosome 11"/>
</dbReference>
<dbReference type="GO" id="GO:0044293">
    <property type="term" value="C:dendriole"/>
    <property type="evidence" value="ECO:0000250"/>
    <property type="project" value="UniProtKB"/>
</dbReference>
<dbReference type="GO" id="GO:0098688">
    <property type="term" value="C:parallel fiber to Purkinje cell synapse"/>
    <property type="evidence" value="ECO:0000250"/>
    <property type="project" value="UniProtKB"/>
</dbReference>
<dbReference type="GO" id="GO:0099534">
    <property type="term" value="F:calcium ion binding involved in regulation of presynaptic cytosolic calcium ion concentration"/>
    <property type="evidence" value="ECO:0000250"/>
    <property type="project" value="UniProtKB"/>
</dbReference>
<dbReference type="GO" id="GO:0006874">
    <property type="term" value="P:intracellular calcium ion homeostasis"/>
    <property type="evidence" value="ECO:0000250"/>
    <property type="project" value="UniProtKB"/>
</dbReference>
<dbReference type="GO" id="GO:0048167">
    <property type="term" value="P:regulation of synaptic plasticity"/>
    <property type="evidence" value="ECO:0000250"/>
    <property type="project" value="UniProtKB"/>
</dbReference>
<dbReference type="GO" id="GO:0099536">
    <property type="term" value="P:synaptic signaling"/>
    <property type="evidence" value="ECO:0000250"/>
    <property type="project" value="UniProtKB"/>
</dbReference>
<dbReference type="CDD" id="cd16177">
    <property type="entry name" value="EFh_HEF_CR"/>
    <property type="match status" value="1"/>
</dbReference>
<dbReference type="FunFam" id="1.10.238.10:FF:000054">
    <property type="entry name" value="Calbindin 2"/>
    <property type="match status" value="1"/>
</dbReference>
<dbReference type="FunFam" id="1.10.238.10:FF:000165">
    <property type="entry name" value="Calbindin 2"/>
    <property type="match status" value="1"/>
</dbReference>
<dbReference type="FunFam" id="1.10.238.10:FF:000116">
    <property type="entry name" value="calretinin isoform X2"/>
    <property type="match status" value="1"/>
</dbReference>
<dbReference type="Gene3D" id="1.10.238.10">
    <property type="entry name" value="EF-hand"/>
    <property type="match status" value="3"/>
</dbReference>
<dbReference type="InterPro" id="IPR029646">
    <property type="entry name" value="CALB2"/>
</dbReference>
<dbReference type="InterPro" id="IPR051001">
    <property type="entry name" value="Calbindin_Ca-bind"/>
</dbReference>
<dbReference type="InterPro" id="IPR011992">
    <property type="entry name" value="EF-hand-dom_pair"/>
</dbReference>
<dbReference type="InterPro" id="IPR018247">
    <property type="entry name" value="EF_Hand_1_Ca_BS"/>
</dbReference>
<dbReference type="InterPro" id="IPR002048">
    <property type="entry name" value="EF_hand_dom"/>
</dbReference>
<dbReference type="PANTHER" id="PTHR19972">
    <property type="entry name" value="CALBINDIN"/>
    <property type="match status" value="1"/>
</dbReference>
<dbReference type="PANTHER" id="PTHR19972:SF4">
    <property type="entry name" value="CALRETININ"/>
    <property type="match status" value="1"/>
</dbReference>
<dbReference type="Pfam" id="PF00036">
    <property type="entry name" value="EF-hand_1"/>
    <property type="match status" value="1"/>
</dbReference>
<dbReference type="Pfam" id="PF13499">
    <property type="entry name" value="EF-hand_7"/>
    <property type="match status" value="2"/>
</dbReference>
<dbReference type="SMART" id="SM00054">
    <property type="entry name" value="EFh"/>
    <property type="match status" value="5"/>
</dbReference>
<dbReference type="SUPFAM" id="SSF47473">
    <property type="entry name" value="EF-hand"/>
    <property type="match status" value="2"/>
</dbReference>
<dbReference type="PROSITE" id="PS00018">
    <property type="entry name" value="EF_HAND_1"/>
    <property type="match status" value="5"/>
</dbReference>
<dbReference type="PROSITE" id="PS50222">
    <property type="entry name" value="EF_HAND_2"/>
    <property type="match status" value="5"/>
</dbReference>
<proteinExistence type="evidence at transcript level"/>
<accession>P07090</accession>
<feature type="chain" id="PRO_0000073478" description="Calretinin">
    <location>
        <begin position="1"/>
        <end position="269"/>
    </location>
</feature>
<feature type="domain" description="EF-hand 1" evidence="3">
    <location>
        <begin position="14"/>
        <end position="49"/>
    </location>
</feature>
<feature type="domain" description="EF-hand 2" evidence="3">
    <location>
        <begin position="61"/>
        <end position="96"/>
    </location>
</feature>
<feature type="domain" description="EF-hand 3" evidence="3">
    <location>
        <begin position="105"/>
        <end position="140"/>
    </location>
</feature>
<feature type="domain" description="EF-hand 4" evidence="3">
    <location>
        <begin position="149"/>
        <end position="184"/>
    </location>
</feature>
<feature type="domain" description="EF-hand 5" evidence="3">
    <location>
        <begin position="193"/>
        <end position="228"/>
    </location>
</feature>
<feature type="domain" description="EF-hand 6" evidence="4">
    <location>
        <begin position="230"/>
        <end position="265"/>
    </location>
</feature>
<feature type="binding site" evidence="3">
    <location>
        <position position="27"/>
    </location>
    <ligand>
        <name>Ca(2+)</name>
        <dbReference type="ChEBI" id="CHEBI:29108"/>
        <label>1</label>
    </ligand>
</feature>
<feature type="binding site" evidence="3">
    <location>
        <position position="29"/>
    </location>
    <ligand>
        <name>Ca(2+)</name>
        <dbReference type="ChEBI" id="CHEBI:29108"/>
        <label>1</label>
    </ligand>
</feature>
<feature type="binding site" evidence="3">
    <location>
        <position position="31"/>
    </location>
    <ligand>
        <name>Ca(2+)</name>
        <dbReference type="ChEBI" id="CHEBI:29108"/>
        <label>1</label>
    </ligand>
</feature>
<feature type="binding site" evidence="3">
    <location>
        <position position="33"/>
    </location>
    <ligand>
        <name>Ca(2+)</name>
        <dbReference type="ChEBI" id="CHEBI:29108"/>
        <label>1</label>
    </ligand>
</feature>
<feature type="binding site" evidence="3">
    <location>
        <position position="38"/>
    </location>
    <ligand>
        <name>Ca(2+)</name>
        <dbReference type="ChEBI" id="CHEBI:29108"/>
        <label>1</label>
    </ligand>
</feature>
<feature type="binding site" evidence="3">
    <location>
        <position position="74"/>
    </location>
    <ligand>
        <name>Ca(2+)</name>
        <dbReference type="ChEBI" id="CHEBI:29108"/>
        <label>2</label>
    </ligand>
</feature>
<feature type="binding site" evidence="3">
    <location>
        <position position="76"/>
    </location>
    <ligand>
        <name>Ca(2+)</name>
        <dbReference type="ChEBI" id="CHEBI:29108"/>
        <label>2</label>
    </ligand>
</feature>
<feature type="binding site" evidence="3">
    <location>
        <position position="78"/>
    </location>
    <ligand>
        <name>Ca(2+)</name>
        <dbReference type="ChEBI" id="CHEBI:29108"/>
        <label>2</label>
    </ligand>
</feature>
<feature type="binding site" evidence="3">
    <location>
        <position position="80"/>
    </location>
    <ligand>
        <name>Ca(2+)</name>
        <dbReference type="ChEBI" id="CHEBI:29108"/>
        <label>2</label>
    </ligand>
</feature>
<feature type="binding site" evidence="3">
    <location>
        <position position="85"/>
    </location>
    <ligand>
        <name>Ca(2+)</name>
        <dbReference type="ChEBI" id="CHEBI:29108"/>
        <label>2</label>
    </ligand>
</feature>
<feature type="binding site" evidence="3">
    <location>
        <position position="118"/>
    </location>
    <ligand>
        <name>Ca(2+)</name>
        <dbReference type="ChEBI" id="CHEBI:29108"/>
        <label>3</label>
    </ligand>
</feature>
<feature type="binding site" evidence="3">
    <location>
        <position position="120"/>
    </location>
    <ligand>
        <name>Ca(2+)</name>
        <dbReference type="ChEBI" id="CHEBI:29108"/>
        <label>3</label>
    </ligand>
</feature>
<feature type="binding site" evidence="3">
    <location>
        <position position="122"/>
    </location>
    <ligand>
        <name>Ca(2+)</name>
        <dbReference type="ChEBI" id="CHEBI:29108"/>
        <label>3</label>
    </ligand>
</feature>
<feature type="binding site" evidence="3">
    <location>
        <position position="124"/>
    </location>
    <ligand>
        <name>Ca(2+)</name>
        <dbReference type="ChEBI" id="CHEBI:29108"/>
        <label>3</label>
    </ligand>
</feature>
<feature type="binding site" evidence="3">
    <location>
        <position position="129"/>
    </location>
    <ligand>
        <name>Ca(2+)</name>
        <dbReference type="ChEBI" id="CHEBI:29108"/>
        <label>3</label>
    </ligand>
</feature>
<feature type="binding site" evidence="3">
    <location>
        <position position="162"/>
    </location>
    <ligand>
        <name>Ca(2+)</name>
        <dbReference type="ChEBI" id="CHEBI:29108"/>
        <label>4</label>
    </ligand>
</feature>
<feature type="binding site" evidence="3">
    <location>
        <position position="164"/>
    </location>
    <ligand>
        <name>Ca(2+)</name>
        <dbReference type="ChEBI" id="CHEBI:29108"/>
        <label>4</label>
    </ligand>
</feature>
<feature type="binding site" evidence="3">
    <location>
        <position position="166"/>
    </location>
    <ligand>
        <name>Ca(2+)</name>
        <dbReference type="ChEBI" id="CHEBI:29108"/>
        <label>4</label>
    </ligand>
</feature>
<feature type="binding site" evidence="3">
    <location>
        <position position="168"/>
    </location>
    <ligand>
        <name>Ca(2+)</name>
        <dbReference type="ChEBI" id="CHEBI:29108"/>
        <label>4</label>
    </ligand>
</feature>
<feature type="binding site" evidence="3">
    <location>
        <position position="173"/>
    </location>
    <ligand>
        <name>Ca(2+)</name>
        <dbReference type="ChEBI" id="CHEBI:29108"/>
        <label>4</label>
    </ligand>
</feature>
<feature type="binding site" evidence="3">
    <location>
        <position position="206"/>
    </location>
    <ligand>
        <name>Ca(2+)</name>
        <dbReference type="ChEBI" id="CHEBI:29108"/>
        <label>5</label>
    </ligand>
</feature>
<feature type="binding site" evidence="3">
    <location>
        <position position="208"/>
    </location>
    <ligand>
        <name>Ca(2+)</name>
        <dbReference type="ChEBI" id="CHEBI:29108"/>
        <label>5</label>
    </ligand>
</feature>
<feature type="binding site" evidence="3">
    <location>
        <position position="210"/>
    </location>
    <ligand>
        <name>Ca(2+)</name>
        <dbReference type="ChEBI" id="CHEBI:29108"/>
        <label>5</label>
    </ligand>
</feature>
<feature type="binding site" evidence="3">
    <location>
        <position position="217"/>
    </location>
    <ligand>
        <name>Ca(2+)</name>
        <dbReference type="ChEBI" id="CHEBI:29108"/>
        <label>5</label>
    </ligand>
</feature>
<sequence>MAGQRAPHLHLAELSASQFLDVWRHFDADGNGYIEGKELENFFQELESARKGTGVDSKRDSLGDKMKEFMHKYDKNADGKIEMAELAQILPTEENFLLCFRQHVGSSSEFMEAWRRYDTDRSGYIEANELKGFLSDLLKKANRPYDEAKLQEYTQTILRMFDMNGDGKLGLSEMSRLLPVQENFLLKFQGMKLSSEEFNAIFAFYDKDGSGFIDEHELDALLKDLYEKNKKEMSIQQLTNYRRSIMNLSDGGKLYRKELEVVLCSEPPL</sequence>